<dbReference type="EC" id="7.1.1.-" evidence="1"/>
<dbReference type="EMBL" id="AE014291">
    <property type="protein sequence ID" value="AAN29738.1"/>
    <property type="molecule type" value="Genomic_DNA"/>
</dbReference>
<dbReference type="EMBL" id="CP002997">
    <property type="protein sequence ID" value="AEM18155.1"/>
    <property type="molecule type" value="Genomic_DNA"/>
</dbReference>
<dbReference type="RefSeq" id="WP_002963944.1">
    <property type="nucleotide sequence ID" value="NZ_KN046804.1"/>
</dbReference>
<dbReference type="SMR" id="Q8G1B0"/>
<dbReference type="GeneID" id="97533884"/>
<dbReference type="KEGG" id="bms:BR0809"/>
<dbReference type="KEGG" id="bsi:BS1330_I0805"/>
<dbReference type="PATRIC" id="fig|204722.21.peg.1632"/>
<dbReference type="HOGENOM" id="CLU_015134_0_1_5"/>
<dbReference type="PhylomeDB" id="Q8G1B0"/>
<dbReference type="Proteomes" id="UP000007104">
    <property type="component" value="Chromosome I"/>
</dbReference>
<dbReference type="GO" id="GO:0005886">
    <property type="term" value="C:plasma membrane"/>
    <property type="evidence" value="ECO:0007669"/>
    <property type="project" value="UniProtKB-SubCell"/>
</dbReference>
<dbReference type="GO" id="GO:0003954">
    <property type="term" value="F:NADH dehydrogenase activity"/>
    <property type="evidence" value="ECO:0007669"/>
    <property type="project" value="TreeGrafter"/>
</dbReference>
<dbReference type="GO" id="GO:0016655">
    <property type="term" value="F:oxidoreductase activity, acting on NAD(P)H, quinone or similar compound as acceptor"/>
    <property type="evidence" value="ECO:0007669"/>
    <property type="project" value="UniProtKB-UniRule"/>
</dbReference>
<dbReference type="GO" id="GO:0048038">
    <property type="term" value="F:quinone binding"/>
    <property type="evidence" value="ECO:0007669"/>
    <property type="project" value="UniProtKB-KW"/>
</dbReference>
<dbReference type="GO" id="GO:0009060">
    <property type="term" value="P:aerobic respiration"/>
    <property type="evidence" value="ECO:0007669"/>
    <property type="project" value="TreeGrafter"/>
</dbReference>
<dbReference type="HAMAP" id="MF_01350">
    <property type="entry name" value="NDH1_NuoH"/>
    <property type="match status" value="1"/>
</dbReference>
<dbReference type="InterPro" id="IPR001694">
    <property type="entry name" value="NADH_UbQ_OxRdtase_su1/FPO"/>
</dbReference>
<dbReference type="InterPro" id="IPR018086">
    <property type="entry name" value="NADH_UbQ_OxRdtase_su1_CS"/>
</dbReference>
<dbReference type="NCBIfam" id="NF004741">
    <property type="entry name" value="PRK06076.1-2"/>
    <property type="match status" value="1"/>
</dbReference>
<dbReference type="NCBIfam" id="NF004745">
    <property type="entry name" value="PRK06076.1-6"/>
    <property type="match status" value="1"/>
</dbReference>
<dbReference type="PANTHER" id="PTHR11432">
    <property type="entry name" value="NADH DEHYDROGENASE SUBUNIT 1"/>
    <property type="match status" value="1"/>
</dbReference>
<dbReference type="PANTHER" id="PTHR11432:SF3">
    <property type="entry name" value="NADH-UBIQUINONE OXIDOREDUCTASE CHAIN 1"/>
    <property type="match status" value="1"/>
</dbReference>
<dbReference type="Pfam" id="PF00146">
    <property type="entry name" value="NADHdh"/>
    <property type="match status" value="1"/>
</dbReference>
<dbReference type="PROSITE" id="PS00668">
    <property type="entry name" value="COMPLEX1_ND1_2"/>
    <property type="match status" value="1"/>
</dbReference>
<evidence type="ECO:0000255" key="1">
    <source>
        <dbReference type="HAMAP-Rule" id="MF_01350"/>
    </source>
</evidence>
<comment type="function">
    <text evidence="1">NDH-1 shuttles electrons from NADH, via FMN and iron-sulfur (Fe-S) centers, to quinones in the respiratory chain. The immediate electron acceptor for the enzyme in this species is believed to be ubiquinone. Couples the redox reaction to proton translocation (for every two electrons transferred, four hydrogen ions are translocated across the cytoplasmic membrane), and thus conserves the redox energy in a proton gradient. This subunit may bind ubiquinone.</text>
</comment>
<comment type="catalytic activity">
    <reaction evidence="1">
        <text>a quinone + NADH + 5 H(+)(in) = a quinol + NAD(+) + 4 H(+)(out)</text>
        <dbReference type="Rhea" id="RHEA:57888"/>
        <dbReference type="ChEBI" id="CHEBI:15378"/>
        <dbReference type="ChEBI" id="CHEBI:24646"/>
        <dbReference type="ChEBI" id="CHEBI:57540"/>
        <dbReference type="ChEBI" id="CHEBI:57945"/>
        <dbReference type="ChEBI" id="CHEBI:132124"/>
    </reaction>
</comment>
<comment type="subunit">
    <text evidence="1">NDH-1 is composed of 14 different subunits. Subunits NuoA, H, J, K, L, M, N constitute the membrane sector of the complex.</text>
</comment>
<comment type="subcellular location">
    <subcellularLocation>
        <location evidence="1">Cell inner membrane</location>
        <topology evidence="1">Multi-pass membrane protein</topology>
    </subcellularLocation>
</comment>
<comment type="similarity">
    <text evidence="1">Belongs to the complex I subunit 1 family.</text>
</comment>
<sequence length="347" mass="38428">MEGIFAAYVLPALIIALKSVVLLVVLLIVVAYLLYADRKIWAAVQLRRGPNVVGPWGLFQAFADLLKFVFKEPIIPSGANKGVFLLAPFISAVLAMATWAVIPVNEGWAVANINVGILYIFAISSLEVYGVIMGGWASNSKYPFLGALRSAAQMVSYEVSIGFVIVTVLLTVGSLNLTDIVLSQNTGLGTMLGLPASFLDWNWLCLFPMFVVFFISALAETNRPPFDLVEAESELVAGHMIEYSSTPFLLFFLGEYVAITLMCALMTVLFLGGWLPPVDVWFLSWVPGIIWFMLKLCFCFFLFAMVKAFVPRYRYDQLMRLGWKVFLPISLFMVVATATFLKVFGLA</sequence>
<proteinExistence type="inferred from homology"/>
<gene>
    <name evidence="1" type="primary">nuoH</name>
    <name type="ordered locus">BR0809</name>
    <name type="ordered locus">BS1330_I0805</name>
</gene>
<feature type="chain" id="PRO_0000244904" description="NADH-quinone oxidoreductase subunit H">
    <location>
        <begin position="1"/>
        <end position="347"/>
    </location>
</feature>
<feature type="transmembrane region" description="Helical" evidence="1">
    <location>
        <begin position="13"/>
        <end position="33"/>
    </location>
</feature>
<feature type="transmembrane region" description="Helical" evidence="1">
    <location>
        <begin position="50"/>
        <end position="70"/>
    </location>
</feature>
<feature type="transmembrane region" description="Helical" evidence="1">
    <location>
        <begin position="82"/>
        <end position="102"/>
    </location>
</feature>
<feature type="transmembrane region" description="Helical" evidence="1">
    <location>
        <begin position="115"/>
        <end position="135"/>
    </location>
</feature>
<feature type="transmembrane region" description="Helical" evidence="1">
    <location>
        <begin position="161"/>
        <end position="181"/>
    </location>
</feature>
<feature type="transmembrane region" description="Helical" evidence="1">
    <location>
        <begin position="198"/>
        <end position="218"/>
    </location>
</feature>
<feature type="transmembrane region" description="Helical" evidence="1">
    <location>
        <begin position="248"/>
        <end position="268"/>
    </location>
</feature>
<feature type="transmembrane region" description="Helical" evidence="1">
    <location>
        <begin position="286"/>
        <end position="306"/>
    </location>
</feature>
<feature type="transmembrane region" description="Helical" evidence="1">
    <location>
        <begin position="325"/>
        <end position="345"/>
    </location>
</feature>
<name>NUOH_BRUSU</name>
<reference key="1">
    <citation type="journal article" date="2002" name="Proc. Natl. Acad. Sci. U.S.A.">
        <title>The Brucella suis genome reveals fundamental similarities between animal and plant pathogens and symbionts.</title>
        <authorList>
            <person name="Paulsen I.T."/>
            <person name="Seshadri R."/>
            <person name="Nelson K.E."/>
            <person name="Eisen J.A."/>
            <person name="Heidelberg J.F."/>
            <person name="Read T.D."/>
            <person name="Dodson R.J."/>
            <person name="Umayam L.A."/>
            <person name="Brinkac L.M."/>
            <person name="Beanan M.J."/>
            <person name="Daugherty S.C."/>
            <person name="DeBoy R.T."/>
            <person name="Durkin A.S."/>
            <person name="Kolonay J.F."/>
            <person name="Madupu R."/>
            <person name="Nelson W.C."/>
            <person name="Ayodeji B."/>
            <person name="Kraul M."/>
            <person name="Shetty J."/>
            <person name="Malek J.A."/>
            <person name="Van Aken S.E."/>
            <person name="Riedmuller S."/>
            <person name="Tettelin H."/>
            <person name="Gill S.R."/>
            <person name="White O."/>
            <person name="Salzberg S.L."/>
            <person name="Hoover D.L."/>
            <person name="Lindler L.E."/>
            <person name="Halling S.M."/>
            <person name="Boyle S.M."/>
            <person name="Fraser C.M."/>
        </authorList>
    </citation>
    <scope>NUCLEOTIDE SEQUENCE [LARGE SCALE GENOMIC DNA]</scope>
    <source>
        <strain>1330</strain>
    </source>
</reference>
<reference key="2">
    <citation type="journal article" date="2011" name="J. Bacteriol.">
        <title>Revised genome sequence of Brucella suis 1330.</title>
        <authorList>
            <person name="Tae H."/>
            <person name="Shallom S."/>
            <person name="Settlage R."/>
            <person name="Preston D."/>
            <person name="Adams L.G."/>
            <person name="Garner H.R."/>
        </authorList>
    </citation>
    <scope>NUCLEOTIDE SEQUENCE [LARGE SCALE GENOMIC DNA]</scope>
    <source>
        <strain>1330</strain>
    </source>
</reference>
<keyword id="KW-0997">Cell inner membrane</keyword>
<keyword id="KW-1003">Cell membrane</keyword>
<keyword id="KW-0472">Membrane</keyword>
<keyword id="KW-0520">NAD</keyword>
<keyword id="KW-0874">Quinone</keyword>
<keyword id="KW-1278">Translocase</keyword>
<keyword id="KW-0812">Transmembrane</keyword>
<keyword id="KW-1133">Transmembrane helix</keyword>
<keyword id="KW-0830">Ubiquinone</keyword>
<organism>
    <name type="scientific">Brucella suis biovar 1 (strain 1330)</name>
    <dbReference type="NCBI Taxonomy" id="204722"/>
    <lineage>
        <taxon>Bacteria</taxon>
        <taxon>Pseudomonadati</taxon>
        <taxon>Pseudomonadota</taxon>
        <taxon>Alphaproteobacteria</taxon>
        <taxon>Hyphomicrobiales</taxon>
        <taxon>Brucellaceae</taxon>
        <taxon>Brucella/Ochrobactrum group</taxon>
        <taxon>Brucella</taxon>
    </lineage>
</organism>
<protein>
    <recommendedName>
        <fullName evidence="1">NADH-quinone oxidoreductase subunit H</fullName>
        <ecNumber evidence="1">7.1.1.-</ecNumber>
    </recommendedName>
    <alternativeName>
        <fullName evidence="1">NADH dehydrogenase I subunit H</fullName>
    </alternativeName>
    <alternativeName>
        <fullName evidence="1">NDH-1 subunit H</fullName>
    </alternativeName>
</protein>
<accession>Q8G1B0</accession>
<accession>G0K8V7</accession>